<accession>A5UCC3</accession>
<comment type="function">
    <text evidence="1">Catalyzes the phosphorylation of D-glycero-D-manno-heptose 7-phosphate at the C-1 position to selectively form D-glycero-beta-D-manno-heptose-1,7-bisphosphate.</text>
</comment>
<comment type="function">
    <text evidence="1">Catalyzes the ADP transfer from ATP to D-glycero-beta-D-manno-heptose 1-phosphate, yielding ADP-D-glycero-beta-D-manno-heptose.</text>
</comment>
<comment type="catalytic activity">
    <reaction evidence="1">
        <text>D-glycero-beta-D-manno-heptose 7-phosphate + ATP = D-glycero-beta-D-manno-heptose 1,7-bisphosphate + ADP + H(+)</text>
        <dbReference type="Rhea" id="RHEA:27473"/>
        <dbReference type="ChEBI" id="CHEBI:15378"/>
        <dbReference type="ChEBI" id="CHEBI:30616"/>
        <dbReference type="ChEBI" id="CHEBI:60204"/>
        <dbReference type="ChEBI" id="CHEBI:60208"/>
        <dbReference type="ChEBI" id="CHEBI:456216"/>
        <dbReference type="EC" id="2.7.1.167"/>
    </reaction>
</comment>
<comment type="catalytic activity">
    <reaction evidence="1">
        <text>D-glycero-beta-D-manno-heptose 1-phosphate + ATP + H(+) = ADP-D-glycero-beta-D-manno-heptose + diphosphate</text>
        <dbReference type="Rhea" id="RHEA:27465"/>
        <dbReference type="ChEBI" id="CHEBI:15378"/>
        <dbReference type="ChEBI" id="CHEBI:30616"/>
        <dbReference type="ChEBI" id="CHEBI:33019"/>
        <dbReference type="ChEBI" id="CHEBI:59967"/>
        <dbReference type="ChEBI" id="CHEBI:61593"/>
        <dbReference type="EC" id="2.7.7.70"/>
    </reaction>
</comment>
<comment type="pathway">
    <text evidence="1">Nucleotide-sugar biosynthesis; ADP-L-glycero-beta-D-manno-heptose biosynthesis; ADP-L-glycero-beta-D-manno-heptose from D-glycero-beta-D-manno-heptose 7-phosphate: step 1/4.</text>
</comment>
<comment type="pathway">
    <text evidence="1">Nucleotide-sugar biosynthesis; ADP-L-glycero-beta-D-manno-heptose biosynthesis; ADP-L-glycero-beta-D-manno-heptose from D-glycero-beta-D-manno-heptose 7-phosphate: step 3/4.</text>
</comment>
<comment type="subunit">
    <text evidence="1">Homodimer.</text>
</comment>
<comment type="similarity">
    <text evidence="1">In the N-terminal section; belongs to the carbohydrate kinase PfkB family.</text>
</comment>
<comment type="similarity">
    <text evidence="1">In the C-terminal section; belongs to the cytidylyltransferase family.</text>
</comment>
<evidence type="ECO:0000255" key="1">
    <source>
        <dbReference type="HAMAP-Rule" id="MF_01603"/>
    </source>
</evidence>
<feature type="chain" id="PRO_0000323490" description="Bifunctional protein HldE">
    <location>
        <begin position="1"/>
        <end position="476"/>
    </location>
</feature>
<feature type="region of interest" description="Ribokinase">
    <location>
        <begin position="1"/>
        <end position="318"/>
    </location>
</feature>
<feature type="region of interest" description="Cytidylyltransferase">
    <location>
        <begin position="344"/>
        <end position="476"/>
    </location>
</feature>
<feature type="active site" evidence="1">
    <location>
        <position position="264"/>
    </location>
</feature>
<feature type="binding site" evidence="1">
    <location>
        <begin position="195"/>
        <end position="198"/>
    </location>
    <ligand>
        <name>ATP</name>
        <dbReference type="ChEBI" id="CHEBI:30616"/>
    </ligand>
</feature>
<reference key="1">
    <citation type="journal article" date="2007" name="Genome Biol.">
        <title>Characterization and modeling of the Haemophilus influenzae core and supragenomes based on the complete genomic sequences of Rd and 12 clinical nontypeable strains.</title>
        <authorList>
            <person name="Hogg J.S."/>
            <person name="Hu F.Z."/>
            <person name="Janto B."/>
            <person name="Boissy R."/>
            <person name="Hayes J."/>
            <person name="Keefe R."/>
            <person name="Post J.C."/>
            <person name="Ehrlich G.D."/>
        </authorList>
    </citation>
    <scope>NUCLEOTIDE SEQUENCE [LARGE SCALE GENOMIC DNA]</scope>
    <source>
        <strain>PittEE</strain>
    </source>
</reference>
<dbReference type="EC" id="2.7.1.167" evidence="1"/>
<dbReference type="EC" id="2.7.7.70" evidence="1"/>
<dbReference type="EMBL" id="CP000671">
    <property type="protein sequence ID" value="ABQ98424.1"/>
    <property type="molecule type" value="Genomic_DNA"/>
</dbReference>
<dbReference type="SMR" id="A5UCC3"/>
<dbReference type="KEGG" id="hip:CGSHiEE_05200"/>
<dbReference type="HOGENOM" id="CLU_021150_2_1_6"/>
<dbReference type="UniPathway" id="UPA00356">
    <property type="reaction ID" value="UER00437"/>
</dbReference>
<dbReference type="UniPathway" id="UPA00356">
    <property type="reaction ID" value="UER00439"/>
</dbReference>
<dbReference type="GO" id="GO:0005829">
    <property type="term" value="C:cytosol"/>
    <property type="evidence" value="ECO:0007669"/>
    <property type="project" value="TreeGrafter"/>
</dbReference>
<dbReference type="GO" id="GO:0005524">
    <property type="term" value="F:ATP binding"/>
    <property type="evidence" value="ECO:0007669"/>
    <property type="project" value="UniProtKB-UniRule"/>
</dbReference>
<dbReference type="GO" id="GO:0033785">
    <property type="term" value="F:heptose 7-phosphate kinase activity"/>
    <property type="evidence" value="ECO:0007669"/>
    <property type="project" value="UniProtKB-UniRule"/>
</dbReference>
<dbReference type="GO" id="GO:0033786">
    <property type="term" value="F:heptose-1-phosphate adenylyltransferase activity"/>
    <property type="evidence" value="ECO:0007669"/>
    <property type="project" value="UniProtKB-UniRule"/>
</dbReference>
<dbReference type="GO" id="GO:0016773">
    <property type="term" value="F:phosphotransferase activity, alcohol group as acceptor"/>
    <property type="evidence" value="ECO:0007669"/>
    <property type="project" value="InterPro"/>
</dbReference>
<dbReference type="GO" id="GO:0097171">
    <property type="term" value="P:ADP-L-glycero-beta-D-manno-heptose biosynthetic process"/>
    <property type="evidence" value="ECO:0007669"/>
    <property type="project" value="UniProtKB-UniPathway"/>
</dbReference>
<dbReference type="CDD" id="cd01172">
    <property type="entry name" value="RfaE_like"/>
    <property type="match status" value="1"/>
</dbReference>
<dbReference type="FunFam" id="3.40.1190.20:FF:000002">
    <property type="entry name" value="Bifunctional protein HldE"/>
    <property type="match status" value="1"/>
</dbReference>
<dbReference type="FunFam" id="3.40.50.620:FF:000028">
    <property type="entry name" value="Bifunctional protein HldE"/>
    <property type="match status" value="1"/>
</dbReference>
<dbReference type="Gene3D" id="3.40.1190.20">
    <property type="match status" value="1"/>
</dbReference>
<dbReference type="Gene3D" id="3.40.50.620">
    <property type="entry name" value="HUPs"/>
    <property type="match status" value="1"/>
</dbReference>
<dbReference type="HAMAP" id="MF_01603">
    <property type="entry name" value="HldE"/>
    <property type="match status" value="1"/>
</dbReference>
<dbReference type="InterPro" id="IPR023030">
    <property type="entry name" value="Bifunc_HldE"/>
</dbReference>
<dbReference type="InterPro" id="IPR004821">
    <property type="entry name" value="Cyt_trans-like"/>
</dbReference>
<dbReference type="InterPro" id="IPR011611">
    <property type="entry name" value="PfkB_dom"/>
</dbReference>
<dbReference type="InterPro" id="IPR011913">
    <property type="entry name" value="RfaE_dom_I"/>
</dbReference>
<dbReference type="InterPro" id="IPR011914">
    <property type="entry name" value="RfaE_dom_II"/>
</dbReference>
<dbReference type="InterPro" id="IPR029056">
    <property type="entry name" value="Ribokinase-like"/>
</dbReference>
<dbReference type="InterPro" id="IPR014729">
    <property type="entry name" value="Rossmann-like_a/b/a_fold"/>
</dbReference>
<dbReference type="NCBIfam" id="TIGR00125">
    <property type="entry name" value="cyt_tran_rel"/>
    <property type="match status" value="1"/>
</dbReference>
<dbReference type="NCBIfam" id="NF008454">
    <property type="entry name" value="PRK11316.1"/>
    <property type="match status" value="1"/>
</dbReference>
<dbReference type="NCBIfam" id="TIGR02198">
    <property type="entry name" value="rfaE_dom_I"/>
    <property type="match status" value="1"/>
</dbReference>
<dbReference type="NCBIfam" id="TIGR02199">
    <property type="entry name" value="rfaE_dom_II"/>
    <property type="match status" value="1"/>
</dbReference>
<dbReference type="PANTHER" id="PTHR46969">
    <property type="entry name" value="BIFUNCTIONAL PROTEIN HLDE"/>
    <property type="match status" value="1"/>
</dbReference>
<dbReference type="PANTHER" id="PTHR46969:SF1">
    <property type="entry name" value="BIFUNCTIONAL PROTEIN HLDE"/>
    <property type="match status" value="1"/>
</dbReference>
<dbReference type="Pfam" id="PF01467">
    <property type="entry name" value="CTP_transf_like"/>
    <property type="match status" value="1"/>
</dbReference>
<dbReference type="Pfam" id="PF00294">
    <property type="entry name" value="PfkB"/>
    <property type="match status" value="1"/>
</dbReference>
<dbReference type="SUPFAM" id="SSF52374">
    <property type="entry name" value="Nucleotidylyl transferase"/>
    <property type="match status" value="1"/>
</dbReference>
<dbReference type="SUPFAM" id="SSF53613">
    <property type="entry name" value="Ribokinase-like"/>
    <property type="match status" value="1"/>
</dbReference>
<proteinExistence type="inferred from homology"/>
<organism>
    <name type="scientific">Haemophilus influenzae (strain PittEE)</name>
    <dbReference type="NCBI Taxonomy" id="374930"/>
    <lineage>
        <taxon>Bacteria</taxon>
        <taxon>Pseudomonadati</taxon>
        <taxon>Pseudomonadota</taxon>
        <taxon>Gammaproteobacteria</taxon>
        <taxon>Pasteurellales</taxon>
        <taxon>Pasteurellaceae</taxon>
        <taxon>Haemophilus</taxon>
    </lineage>
</organism>
<sequence length="476" mass="51935">MAQYSAEFKQAKVLVLGDVMLDRYWFGATNRISPEAPVPVVRVQENEERAGGAANVAMNIASLNVSVQLMGLIGQDETGSALSLLLEKQKIDCNFVALETHPTITKLRILSRHQQLLRLDFEEDFNNVDCKDLLAKLESAVKNYGALILSDYGKGTLKDVQKMIQIARKANVPVLIDPKGTDFERYRGATLLTPNMSEFEAVVGKCNTEEEIIKKGLKLISDIELTALLVTRSEKGMTLLRPNQEPYHLPTVAKEVFDVTGAGDTVISVLATALADGRSFEESCYLANVAAGIVVGKLGTSTVSTVELENAIHARPETGFGIMSEAELKDAVAQAKARGEKIVMTNGCFDILHPGHISYLENARKLGDRLIVAVNSDDSVKRLKGESRPINNLENRMAVLAGLASVDWLVPFTEDTPQRLIGEILPDLLVKGGDYKPEEIAGSKEVWANGGDVKVLNFENGCSTTNVIEKIKLLKD</sequence>
<gene>
    <name evidence="1" type="primary">hldE</name>
    <name type="ordered locus">CGSHiEE_05200</name>
</gene>
<name>HLDE_HAEIE</name>
<protein>
    <recommendedName>
        <fullName evidence="1">Bifunctional protein HldE</fullName>
    </recommendedName>
    <domain>
        <recommendedName>
            <fullName evidence="1">D-beta-D-heptose 7-phosphate kinase</fullName>
            <ecNumber evidence="1">2.7.1.167</ecNumber>
        </recommendedName>
        <alternativeName>
            <fullName evidence="1">D-beta-D-heptose 7-phosphotransferase</fullName>
        </alternativeName>
        <alternativeName>
            <fullName evidence="1">D-glycero-beta-D-manno-heptose-7-phosphate kinase</fullName>
        </alternativeName>
    </domain>
    <domain>
        <recommendedName>
            <fullName evidence="1">D-beta-D-heptose 1-phosphate adenylyltransferase</fullName>
            <ecNumber evidence="1">2.7.7.70</ecNumber>
        </recommendedName>
        <alternativeName>
            <fullName evidence="1">D-glycero-beta-D-manno-heptose 1-phosphate adenylyltransferase</fullName>
        </alternativeName>
    </domain>
</protein>
<keyword id="KW-0067">ATP-binding</keyword>
<keyword id="KW-0119">Carbohydrate metabolism</keyword>
<keyword id="KW-0418">Kinase</keyword>
<keyword id="KW-0511">Multifunctional enzyme</keyword>
<keyword id="KW-0547">Nucleotide-binding</keyword>
<keyword id="KW-0548">Nucleotidyltransferase</keyword>
<keyword id="KW-0808">Transferase</keyword>